<organism>
    <name type="scientific">Homo sapiens</name>
    <name type="common">Human</name>
    <dbReference type="NCBI Taxonomy" id="9606"/>
    <lineage>
        <taxon>Eukaryota</taxon>
        <taxon>Metazoa</taxon>
        <taxon>Chordata</taxon>
        <taxon>Craniata</taxon>
        <taxon>Vertebrata</taxon>
        <taxon>Euteleostomi</taxon>
        <taxon>Mammalia</taxon>
        <taxon>Eutheria</taxon>
        <taxon>Euarchontoglires</taxon>
        <taxon>Primates</taxon>
        <taxon>Haplorrhini</taxon>
        <taxon>Catarrhini</taxon>
        <taxon>Hominidae</taxon>
        <taxon>Homo</taxon>
    </lineage>
</organism>
<sequence>MAAAEEGCSVGAEADRELEELLESALDDFDKAKPSPAPPSTTTAPDASGPQKRSPGDTAKDALFASQEKFFQELFDSELASQATAEFEKAMKELAEEEPHLVEQFQKLSEAAGRVGSDMTSQQEFTSCLKETLSGLAKNATDLQNSSMSEEELTKAMEGLGMDEGDGEGNILPIMQSIMQNLLSKDVLYPSLKEITEKYPEWLQSHRESLPPEQFEKYQEQHSVMCKICEQFEAETPTDSETTQKARFEMVLDLMQQLQDLGHPPKELAGEMPPGLNFDLDALNLSGPPGASGEQCLIM</sequence>
<proteinExistence type="evidence at protein level"/>
<reference key="1">
    <citation type="journal article" date="1994" name="Gene">
        <title>Sequence of a putative human housekeeping gene (HK33) localized on chromosome 1.</title>
        <authorList>
            <person name="Braun A."/>
            <person name="Kammerer S."/>
            <person name="Weissenhorn W."/>
            <person name="Weiss E.H."/>
            <person name="Cleve H."/>
        </authorList>
    </citation>
    <scope>NUCLEOTIDE SEQUENCE [MRNA] (ISOFORM 1)</scope>
    <source>
        <tissue>Ovary</tissue>
        <tissue>Placenta</tissue>
    </source>
</reference>
<reference key="2">
    <citation type="journal article" date="1997" name="Genomics">
        <title>Genomic organization and molecular characterization of a gene encoding HsPXF, a human peroxisomal farnesylated protein.</title>
        <authorList>
            <person name="Kammerer S."/>
            <person name="Arnold N."/>
            <person name="Gutensohn W."/>
            <person name="Mewes H.-W."/>
            <person name="Kunau W.-H."/>
            <person name="Hoefler G."/>
            <person name="Roscher A.A."/>
            <person name="Braun A."/>
        </authorList>
    </citation>
    <scope>NUCLEOTIDE SEQUENCE [GENOMIC DNA]</scope>
    <scope>ALTERNATIVE SPLICING</scope>
    <scope>TISSUE SPECIFICITY</scope>
    <scope>SUBCELLULAR LOCATION</scope>
    <scope>ISOPRENYLATION AT CYS-296</scope>
    <scope>MUTAGENESIS OF CYS-296</scope>
    <source>
        <tissue>Leukocyte</tissue>
        <tissue>Placenta</tissue>
    </source>
</reference>
<reference key="3">
    <citation type="journal article" date="1999" name="Proc. Natl. Acad. Sci. U.S.A.">
        <title>Human PEX19: cDNA cloning by functional complementation, mutation analysis in a patient with Zellweger syndrome, and potential role in peroxisomal membrane assembly.</title>
        <authorList>
            <person name="Matsuzono Y."/>
            <person name="Kinoshita N."/>
            <person name="Tamura S."/>
            <person name="Shimozawa N."/>
            <person name="Hamasaki M."/>
            <person name="Ghaedi K."/>
            <person name="Wanders R.J.A."/>
            <person name="Suzuki Y."/>
            <person name="Kondo N."/>
            <person name="Fujiki Y."/>
        </authorList>
    </citation>
    <scope>NUCLEOTIDE SEQUENCE [MRNA] (ISOFORM 1)</scope>
    <scope>ISOPRENYLATION AT CYS-296</scope>
    <scope>MUTAGENESIS OF CYS-296</scope>
    <scope>SUBCELLULAR LOCATION</scope>
    <scope>FUNCTION</scope>
    <scope>INVOLVEMENT IN PBD12A</scope>
    <source>
        <tissue>Liver</tissue>
    </source>
</reference>
<reference key="4">
    <citation type="submission" date="2003-05" db="EMBL/GenBank/DDBJ databases">
        <title>Cloning of human full-length CDSs in BD Creator(TM) system donor vector.</title>
        <authorList>
            <person name="Kalnine N."/>
            <person name="Chen X."/>
            <person name="Rolfs A."/>
            <person name="Halleck A."/>
            <person name="Hines L."/>
            <person name="Eisenstein S."/>
            <person name="Koundinya M."/>
            <person name="Raphael J."/>
            <person name="Moreira D."/>
            <person name="Kelley T."/>
            <person name="LaBaer J."/>
            <person name="Lin Y."/>
            <person name="Phelan M."/>
            <person name="Farmer A."/>
        </authorList>
    </citation>
    <scope>NUCLEOTIDE SEQUENCE [LARGE SCALE MRNA] (ISOFORM 1)</scope>
</reference>
<reference key="5">
    <citation type="journal article" date="2016" name="Cell">
        <title>Widespread Expansion of Protein Interaction Capabilities by Alternative Splicing.</title>
        <authorList>
            <person name="Yang X."/>
            <person name="Coulombe-Huntington J."/>
            <person name="Kang S."/>
            <person name="Sheynkman G.M."/>
            <person name="Hao T."/>
            <person name="Richardson A."/>
            <person name="Sun S."/>
            <person name="Yang F."/>
            <person name="Shen Y.A."/>
            <person name="Murray R."/>
            <person name="Spirohn K."/>
            <person name="Begg B.E."/>
            <person name="Duran-Frigola M."/>
            <person name="MacWilliams A."/>
            <person name="Pevzner S.J."/>
            <person name="Zhong Q."/>
            <person name="Trigg S.A."/>
            <person name="Tam S."/>
            <person name="Ghamsari L."/>
            <person name="Sahni N."/>
            <person name="Yi S."/>
            <person name="Rodriguez M.D."/>
            <person name="Balcha D."/>
            <person name="Tan G."/>
            <person name="Costanzo M."/>
            <person name="Andrews B."/>
            <person name="Boone C."/>
            <person name="Zhou X.J."/>
            <person name="Salehi-Ashtiani K."/>
            <person name="Charloteaux B."/>
            <person name="Chen A."/>
            <person name="Calderwood M.A."/>
            <person name="Aloy P."/>
            <person name="Roth F.P."/>
            <person name="Hill D.E."/>
            <person name="Iakoucheva L.M."/>
            <person name="Xia Y."/>
            <person name="Vidal M."/>
        </authorList>
    </citation>
    <scope>NUCLEOTIDE SEQUENCE [LARGE SCALE MRNA] (ISOFORM 6)</scope>
</reference>
<reference key="6">
    <citation type="journal article" date="2006" name="Nature">
        <title>The DNA sequence and biological annotation of human chromosome 1.</title>
        <authorList>
            <person name="Gregory S.G."/>
            <person name="Barlow K.F."/>
            <person name="McLay K.E."/>
            <person name="Kaul R."/>
            <person name="Swarbreck D."/>
            <person name="Dunham A."/>
            <person name="Scott C.E."/>
            <person name="Howe K.L."/>
            <person name="Woodfine K."/>
            <person name="Spencer C.C.A."/>
            <person name="Jones M.C."/>
            <person name="Gillson C."/>
            <person name="Searle S."/>
            <person name="Zhou Y."/>
            <person name="Kokocinski F."/>
            <person name="McDonald L."/>
            <person name="Evans R."/>
            <person name="Phillips K."/>
            <person name="Atkinson A."/>
            <person name="Cooper R."/>
            <person name="Jones C."/>
            <person name="Hall R.E."/>
            <person name="Andrews T.D."/>
            <person name="Lloyd C."/>
            <person name="Ainscough R."/>
            <person name="Almeida J.P."/>
            <person name="Ambrose K.D."/>
            <person name="Anderson F."/>
            <person name="Andrew R.W."/>
            <person name="Ashwell R.I.S."/>
            <person name="Aubin K."/>
            <person name="Babbage A.K."/>
            <person name="Bagguley C.L."/>
            <person name="Bailey J."/>
            <person name="Beasley H."/>
            <person name="Bethel G."/>
            <person name="Bird C.P."/>
            <person name="Bray-Allen S."/>
            <person name="Brown J.Y."/>
            <person name="Brown A.J."/>
            <person name="Buckley D."/>
            <person name="Burton J."/>
            <person name="Bye J."/>
            <person name="Carder C."/>
            <person name="Chapman J.C."/>
            <person name="Clark S.Y."/>
            <person name="Clarke G."/>
            <person name="Clee C."/>
            <person name="Cobley V."/>
            <person name="Collier R.E."/>
            <person name="Corby N."/>
            <person name="Coville G.J."/>
            <person name="Davies J."/>
            <person name="Deadman R."/>
            <person name="Dunn M."/>
            <person name="Earthrowl M."/>
            <person name="Ellington A.G."/>
            <person name="Errington H."/>
            <person name="Frankish A."/>
            <person name="Frankland J."/>
            <person name="French L."/>
            <person name="Garner P."/>
            <person name="Garnett J."/>
            <person name="Gay L."/>
            <person name="Ghori M.R.J."/>
            <person name="Gibson R."/>
            <person name="Gilby L.M."/>
            <person name="Gillett W."/>
            <person name="Glithero R.J."/>
            <person name="Grafham D.V."/>
            <person name="Griffiths C."/>
            <person name="Griffiths-Jones S."/>
            <person name="Grocock R."/>
            <person name="Hammond S."/>
            <person name="Harrison E.S.I."/>
            <person name="Hart E."/>
            <person name="Haugen E."/>
            <person name="Heath P.D."/>
            <person name="Holmes S."/>
            <person name="Holt K."/>
            <person name="Howden P.J."/>
            <person name="Hunt A.R."/>
            <person name="Hunt S.E."/>
            <person name="Hunter G."/>
            <person name="Isherwood J."/>
            <person name="James R."/>
            <person name="Johnson C."/>
            <person name="Johnson D."/>
            <person name="Joy A."/>
            <person name="Kay M."/>
            <person name="Kershaw J.K."/>
            <person name="Kibukawa M."/>
            <person name="Kimberley A.M."/>
            <person name="King A."/>
            <person name="Knights A.J."/>
            <person name="Lad H."/>
            <person name="Laird G."/>
            <person name="Lawlor S."/>
            <person name="Leongamornlert D.A."/>
            <person name="Lloyd D.M."/>
            <person name="Loveland J."/>
            <person name="Lovell J."/>
            <person name="Lush M.J."/>
            <person name="Lyne R."/>
            <person name="Martin S."/>
            <person name="Mashreghi-Mohammadi M."/>
            <person name="Matthews L."/>
            <person name="Matthews N.S.W."/>
            <person name="McLaren S."/>
            <person name="Milne S."/>
            <person name="Mistry S."/>
            <person name="Moore M.J.F."/>
            <person name="Nickerson T."/>
            <person name="O'Dell C.N."/>
            <person name="Oliver K."/>
            <person name="Palmeiri A."/>
            <person name="Palmer S.A."/>
            <person name="Parker A."/>
            <person name="Patel D."/>
            <person name="Pearce A.V."/>
            <person name="Peck A.I."/>
            <person name="Pelan S."/>
            <person name="Phelps K."/>
            <person name="Phillimore B.J."/>
            <person name="Plumb R."/>
            <person name="Rajan J."/>
            <person name="Raymond C."/>
            <person name="Rouse G."/>
            <person name="Saenphimmachak C."/>
            <person name="Sehra H.K."/>
            <person name="Sheridan E."/>
            <person name="Shownkeen R."/>
            <person name="Sims S."/>
            <person name="Skuce C.D."/>
            <person name="Smith M."/>
            <person name="Steward C."/>
            <person name="Subramanian S."/>
            <person name="Sycamore N."/>
            <person name="Tracey A."/>
            <person name="Tromans A."/>
            <person name="Van Helmond Z."/>
            <person name="Wall M."/>
            <person name="Wallis J.M."/>
            <person name="White S."/>
            <person name="Whitehead S.L."/>
            <person name="Wilkinson J.E."/>
            <person name="Willey D.L."/>
            <person name="Williams H."/>
            <person name="Wilming L."/>
            <person name="Wray P.W."/>
            <person name="Wu Z."/>
            <person name="Coulson A."/>
            <person name="Vaudin M."/>
            <person name="Sulston J.E."/>
            <person name="Durbin R.M."/>
            <person name="Hubbard T."/>
            <person name="Wooster R."/>
            <person name="Dunham I."/>
            <person name="Carter N.P."/>
            <person name="McVean G."/>
            <person name="Ross M.T."/>
            <person name="Harrow J."/>
            <person name="Olson M.V."/>
            <person name="Beck S."/>
            <person name="Rogers J."/>
            <person name="Bentley D.R."/>
        </authorList>
    </citation>
    <scope>NUCLEOTIDE SEQUENCE [LARGE SCALE GENOMIC DNA]</scope>
</reference>
<reference key="7">
    <citation type="submission" date="2005-09" db="EMBL/GenBank/DDBJ databases">
        <authorList>
            <person name="Mural R.J."/>
            <person name="Istrail S."/>
            <person name="Sutton G.G."/>
            <person name="Florea L."/>
            <person name="Halpern A.L."/>
            <person name="Mobarry C.M."/>
            <person name="Lippert R."/>
            <person name="Walenz B."/>
            <person name="Shatkay H."/>
            <person name="Dew I."/>
            <person name="Miller J.R."/>
            <person name="Flanigan M.J."/>
            <person name="Edwards N.J."/>
            <person name="Bolanos R."/>
            <person name="Fasulo D."/>
            <person name="Halldorsson B.V."/>
            <person name="Hannenhalli S."/>
            <person name="Turner R."/>
            <person name="Yooseph S."/>
            <person name="Lu F."/>
            <person name="Nusskern D.R."/>
            <person name="Shue B.C."/>
            <person name="Zheng X.H."/>
            <person name="Zhong F."/>
            <person name="Delcher A.L."/>
            <person name="Huson D.H."/>
            <person name="Kravitz S.A."/>
            <person name="Mouchard L."/>
            <person name="Reinert K."/>
            <person name="Remington K.A."/>
            <person name="Clark A.G."/>
            <person name="Waterman M.S."/>
            <person name="Eichler E.E."/>
            <person name="Adams M.D."/>
            <person name="Hunkapiller M.W."/>
            <person name="Myers E.W."/>
            <person name="Venter J.C."/>
        </authorList>
    </citation>
    <scope>NUCLEOTIDE SEQUENCE [LARGE SCALE GENOMIC DNA]</scope>
</reference>
<reference key="8">
    <citation type="journal article" date="2004" name="Genome Res.">
        <title>The status, quality, and expansion of the NIH full-length cDNA project: the Mammalian Gene Collection (MGC).</title>
        <authorList>
            <consortium name="The MGC Project Team"/>
        </authorList>
    </citation>
    <scope>NUCLEOTIDE SEQUENCE [LARGE SCALE MRNA]</scope>
    <source>
        <tissue>Lung</tissue>
    </source>
</reference>
<reference key="9">
    <citation type="submission" date="2001-05" db="EMBL/GenBank/DDBJ databases">
        <title>Identification of immuno-peptidmics that are recognized by tumor-reactive CTL generated from TIL of colon cancer patients.</title>
        <authorList>
            <person name="Shichijo S."/>
            <person name="Itoh K."/>
        </authorList>
    </citation>
    <scope>NUCLEOTIDE SEQUENCE [LARGE SCALE MRNA] OF 2-39 (ISOFORM 6)</scope>
    <source>
        <tissue>Colon adenocarcinoma</tissue>
    </source>
</reference>
<reference key="10">
    <citation type="journal article" date="2000" name="Biochem. Biophys. Res. Commun.">
        <title>Human adrenoleukodystrophy protein and related peroxisomal ABC transporters interact with the peroxisomal assembly protein PEX19p.</title>
        <authorList>
            <person name="Gloeckner C.J."/>
            <person name="Mayerhofer P.U."/>
            <person name="Landgraf P."/>
            <person name="Muntau A.C."/>
            <person name="Holzinger A."/>
            <person name="Gerber J.-K."/>
            <person name="Kammerer S."/>
            <person name="Adamski J."/>
            <person name="Roscher A.A."/>
        </authorList>
    </citation>
    <scope>INTERACTION WITH ABCD1; ABCD2 AND ABCD3</scope>
    <scope>MUTAGENESIS OF CYS-296</scope>
    <source>
        <tissue>Brain</tissue>
    </source>
</reference>
<reference key="11">
    <citation type="journal article" date="2000" name="J. Cell Biol.">
        <title>PEX19 binds multiple peroxisomal membrane proteins, is predominantly cytoplasmic, and is required for peroxisome membrane synthesis.</title>
        <authorList>
            <person name="Sacksteder K.A."/>
            <person name="Jones J.M."/>
            <person name="South S.T."/>
            <person name="Li X."/>
            <person name="Liu Y."/>
            <person name="Gould S.J."/>
        </authorList>
    </citation>
    <scope>FUNCTION</scope>
    <scope>MUTAGENESIS OF CYS-296</scope>
    <scope>SUBCELLULAR LOCATION</scope>
    <scope>INTERACTION WITH ABCD1; ABCD2; ABCD3; PEX3; PEX10; PEX11A; PEX11B; PEX12; PEX13; PEX14; PEX16; PXMP2; PXMP4 AND SLC25A17</scope>
</reference>
<reference key="12">
    <citation type="journal article" date="2001" name="J. Biol. Chem.">
        <title>Pex19p dampens the p19ARF-p53-p21WAF1 tumor suppressor pathway.</title>
        <authorList>
            <person name="Sugihara T."/>
            <person name="Kaul S.C."/>
            <person name="Kato J.-Y."/>
            <person name="Reddel R.R."/>
            <person name="Nomura H."/>
            <person name="Wadhwa R."/>
        </authorList>
    </citation>
    <scope>FUNCTION</scope>
    <scope>SUBCELLULAR LOCATION</scope>
    <scope>INTERACTION WITH CDKN2A</scope>
    <source>
        <tissue>Testis</tissue>
    </source>
</reference>
<reference key="13">
    <citation type="journal article" date="2001" name="Mol. Cell. Biol.">
        <title>Human pex19p binds peroxisomal integral membrane proteins at regions distinct from their sorting sequences.</title>
        <authorList>
            <person name="Fransen M."/>
            <person name="Wylin T."/>
            <person name="Brees C."/>
            <person name="Mannaerts G.P."/>
            <person name="Van Veldhoven P.P."/>
        </authorList>
    </citation>
    <scope>INTERACTION WITH PEX3; PEX10; PEX11B; PEX12; PEX13 AND PEX16</scope>
    <scope>MUTAGENESIS OF 296-CYS--MET-299</scope>
</reference>
<reference key="14">
    <citation type="journal article" date="2002" name="Biochem. Biophys. Res. Commun.">
        <title>Two splice variants of human PEX19 exhibit distinct functions in peroxisomal assembly.</title>
        <authorList>
            <person name="Mayerhofer P.U."/>
            <person name="Kattenfeld T."/>
            <person name="Roscher A.A."/>
            <person name="Muntau A.C."/>
        </authorList>
    </citation>
    <scope>FUNCTION</scope>
    <scope>INTERACTION WITH ABCD1; ABCD2; ABCD3 AND PEX3</scope>
</reference>
<reference key="15">
    <citation type="journal article" date="2004" name="J. Cell Biol.">
        <title>PEX3 functions as a PEX19 docking factor in the import of class I peroxisomal membrane proteins.</title>
        <authorList>
            <person name="Fang Y."/>
            <person name="Morrell J.C."/>
            <person name="Jones J.M."/>
            <person name="Gould S.J."/>
        </authorList>
    </citation>
    <scope>FUNCTION</scope>
    <scope>INTERACTION WITH PEX3</scope>
    <scope>SUBCELLULAR LOCATION</scope>
</reference>
<reference key="16">
    <citation type="journal article" date="2004" name="J. Cell Biol.">
        <title>PEX19 is a predominantly cytosolic chaperone and import receptor for class 1 peroxisomal membrane proteins.</title>
        <authorList>
            <person name="Jones J.M."/>
            <person name="Morrell J.C."/>
            <person name="Gould S.J."/>
        </authorList>
    </citation>
    <scope>FUNCTION</scope>
    <scope>INTERACTION WITH PEX11B; PEX16; PXMP2; PXMP4; SLC25A17 AND ABCD3</scope>
</reference>
<reference key="17">
    <citation type="journal article" date="2008" name="Proc. Natl. Acad. Sci. U.S.A.">
        <title>A quantitative atlas of mitotic phosphorylation.</title>
        <authorList>
            <person name="Dephoure N."/>
            <person name="Zhou C."/>
            <person name="Villen J."/>
            <person name="Beausoleil S.A."/>
            <person name="Bakalarski C.E."/>
            <person name="Elledge S.J."/>
            <person name="Gygi S.P."/>
        </authorList>
    </citation>
    <scope>IDENTIFICATION BY MASS SPECTROMETRY [LARGE SCALE ANALYSIS]</scope>
    <source>
        <tissue>Cervix carcinoma</tissue>
    </source>
</reference>
<reference key="18">
    <citation type="journal article" date="2010" name="Am. J. Med. Genet. A">
        <title>A mutation in PEX19 causes a severe clinical phenotype in a patient with peroxisomal biogenesis disorder.</title>
        <authorList>
            <person name="Mohamed S."/>
            <person name="El-Meleagy E."/>
            <person name="Nasr A."/>
            <person name="Ebberink M.S."/>
            <person name="Wanders R.J."/>
            <person name="Waterham H.R."/>
        </authorList>
    </citation>
    <scope>INVOLVEMENT IN PBD-CG14</scope>
</reference>
<reference key="19">
    <citation type="journal article" date="2011" name="BMC Syst. Biol.">
        <title>Initial characterization of the human central proteome.</title>
        <authorList>
            <person name="Burkard T.R."/>
            <person name="Planyavsky M."/>
            <person name="Kaupe I."/>
            <person name="Breitwieser F.P."/>
            <person name="Buerckstuemmer T."/>
            <person name="Bennett K.L."/>
            <person name="Superti-Furga G."/>
            <person name="Colinge J."/>
        </authorList>
    </citation>
    <scope>IDENTIFICATION BY MASS SPECTROMETRY [LARGE SCALE ANALYSIS]</scope>
</reference>
<reference key="20">
    <citation type="journal article" date="2012" name="Proc. Natl. Acad. Sci. U.S.A.">
        <title>N-terminal acetylome analyses and functional insights of the N-terminal acetyltransferase NatB.</title>
        <authorList>
            <person name="Van Damme P."/>
            <person name="Lasa M."/>
            <person name="Polevoda B."/>
            <person name="Gazquez C."/>
            <person name="Elosegui-Artola A."/>
            <person name="Kim D.S."/>
            <person name="De Juan-Pardo E."/>
            <person name="Demeyer K."/>
            <person name="Hole K."/>
            <person name="Larrea E."/>
            <person name="Timmerman E."/>
            <person name="Prieto J."/>
            <person name="Arnesen T."/>
            <person name="Sherman F."/>
            <person name="Gevaert K."/>
            <person name="Aldabe R."/>
        </authorList>
    </citation>
    <scope>ACETYLATION [LARGE SCALE ANALYSIS] AT ALA-2</scope>
    <scope>CLEAVAGE OF INITIATOR METHIONINE [LARGE SCALE ANALYSIS]</scope>
    <scope>IDENTIFICATION BY MASS SPECTROMETRY [LARGE SCALE ANALYSIS]</scope>
</reference>
<reference key="21">
    <citation type="journal article" date="2013" name="J. Proteome Res.">
        <title>Toward a comprehensive characterization of a human cancer cell phosphoproteome.</title>
        <authorList>
            <person name="Zhou H."/>
            <person name="Di Palma S."/>
            <person name="Preisinger C."/>
            <person name="Peng M."/>
            <person name="Polat A.N."/>
            <person name="Heck A.J."/>
            <person name="Mohammed S."/>
        </authorList>
    </citation>
    <scope>PHOSPHORYLATION [LARGE SCALE ANALYSIS] AT SER-35 AND SER-54</scope>
    <scope>IDENTIFICATION BY MASS SPECTROMETRY [LARGE SCALE ANALYSIS]</scope>
    <source>
        <tissue>Cervix carcinoma</tissue>
        <tissue>Erythroleukemia</tissue>
    </source>
</reference>
<reference key="22">
    <citation type="journal article" date="2014" name="J. Proteomics">
        <title>An enzyme assisted RP-RPLC approach for in-depth analysis of human liver phosphoproteome.</title>
        <authorList>
            <person name="Bian Y."/>
            <person name="Song C."/>
            <person name="Cheng K."/>
            <person name="Dong M."/>
            <person name="Wang F."/>
            <person name="Huang J."/>
            <person name="Sun D."/>
            <person name="Wang L."/>
            <person name="Ye M."/>
            <person name="Zou H."/>
        </authorList>
    </citation>
    <scope>PHOSPHORYLATION [LARGE SCALE ANALYSIS] AT SER-35</scope>
    <scope>IDENTIFICATION BY MASS SPECTROMETRY [LARGE SCALE ANALYSIS]</scope>
    <source>
        <tissue>Liver</tissue>
    </source>
</reference>
<reference key="23">
    <citation type="journal article" date="2015" name="Proteomics">
        <title>N-terminome analysis of the human mitochondrial proteome.</title>
        <authorList>
            <person name="Vaca Jacome A.S."/>
            <person name="Rabilloud T."/>
            <person name="Schaeffer-Reiss C."/>
            <person name="Rompais M."/>
            <person name="Ayoub D."/>
            <person name="Lane L."/>
            <person name="Bairoch A."/>
            <person name="Van Dorsselaer A."/>
            <person name="Carapito C."/>
        </authorList>
    </citation>
    <scope>ACETYLATION [LARGE SCALE ANALYSIS] AT ALA-2</scope>
    <scope>CLEAVAGE OF INITIATOR METHIONINE [LARGE SCALE ANALYSIS]</scope>
    <scope>IDENTIFICATION BY MASS SPECTROMETRY [LARGE SCALE ANALYSIS]</scope>
</reference>
<reference key="24">
    <citation type="journal article" date="2016" name="Sci. Rep.">
        <title>Peroxisomes are platforms for cytomegalovirus' evasion from the cellular immune response.</title>
        <authorList>
            <person name="Magalhaes A.C."/>
            <person name="Ferreira A.R."/>
            <person name="Gomes S."/>
            <person name="Vieira M."/>
            <person name="Gouveia A."/>
            <person name="Valenca I."/>
            <person name="Islinger M."/>
            <person name="Nascimento R."/>
            <person name="Schrader M."/>
            <person name="Kagan J.C."/>
            <person name="Ribeiro D."/>
        </authorList>
    </citation>
    <scope>SUBCELLULAR LOCATION</scope>
    <scope>INTERACTION WITH HUMAN CYTOMEGALOVIRUS PROTEIN UL37 (MICROBIAL INFECTION)</scope>
</reference>
<reference key="25">
    <citation type="journal article" date="2009" name="EMBO J.">
        <title>Structural basis for competitive interactions of Pex14 with the import receptors Pex5 and Pex19.</title>
        <authorList>
            <person name="Neufeld C."/>
            <person name="Filipp F.V."/>
            <person name="Simon B."/>
            <person name="Neuhaus A."/>
            <person name="Schueller N."/>
            <person name="David C."/>
            <person name="Kooshapur H."/>
            <person name="Madl T."/>
            <person name="Erdmann R."/>
            <person name="Schliebs W."/>
            <person name="Wilmanns M."/>
            <person name="Sattler M."/>
        </authorList>
    </citation>
    <scope>STRUCTURE BY NMR OF 66-77 IN COMPLEX WITH PEX14</scope>
</reference>
<reference key="26">
    <citation type="journal article" date="2010" name="EMBO J.">
        <title>Structural basis for docking of peroxisomal membrane protein carrier Pex19p onto its receptor Pex3p.</title>
        <authorList>
            <person name="Sato Y."/>
            <person name="Shibata H."/>
            <person name="Nakatsu T."/>
            <person name="Nakano H."/>
            <person name="Kashiwayama Y."/>
            <person name="Imanaka T."/>
            <person name="Kato H."/>
        </authorList>
    </citation>
    <scope>X-RAY CRYSTALLOGRAPHY (2.50 ANGSTROMS) OF 1-44 IN COMPLEX WITH PEX3</scope>
    <scope>SUBUNIT</scope>
</reference>
<reference key="27">
    <citation type="journal article" date="2010" name="J. Biol. Chem.">
        <title>Insights into peroxisome function from the structure of PEX3 in complex with a soluble fragment of PEX19.</title>
        <authorList>
            <person name="Schmidt F."/>
            <person name="Treiber N."/>
            <person name="Zocher G."/>
            <person name="Bjelic S."/>
            <person name="Steinmetz M.O."/>
            <person name="Kalbacher H."/>
            <person name="Stehle T."/>
            <person name="Dodt G."/>
        </authorList>
    </citation>
    <scope>X-RAY CRYSTALLOGRAPHY (2.42 ANGSTROMS) OF 13-33 IN COMPLEX WITH PEX3</scope>
    <scope>SUBUNIT</scope>
    <scope>MUTAGENESIS OF PHE-29</scope>
</reference>
<reference key="28">
    <citation type="journal article" date="2021" name="Am. J. Hum. Genet.">
        <title>Progressive myoclonus epilepsies-Residual unsolved cases have marked genetic heterogeneity including dolichol-dependent protein glycosylation pathway genes.</title>
        <authorList>
            <person name="Courage C."/>
            <person name="Oliver K.L."/>
            <person name="Park E.J."/>
            <person name="Cameron J.M."/>
            <person name="Grabinska K.A."/>
            <person name="Muona M."/>
            <person name="Canafoglia L."/>
            <person name="Gambardella A."/>
            <person name="Said E."/>
            <person name="Afawi Z."/>
            <person name="Baykan B."/>
            <person name="Brandt C."/>
            <person name="di Bonaventura C."/>
            <person name="Chew H.B."/>
            <person name="Criscuolo C."/>
            <person name="Dibbens L.M."/>
            <person name="Castellotti B."/>
            <person name="Riguzzi P."/>
            <person name="Labate A."/>
            <person name="Filla A."/>
            <person name="Giallonardo A.T."/>
            <person name="Berecki G."/>
            <person name="Jackson C.B."/>
            <person name="Joensuu T."/>
            <person name="Damiano J.A."/>
            <person name="Kivity S."/>
            <person name="Korczyn A."/>
            <person name="Palotie A."/>
            <person name="Striano P."/>
            <person name="Uccellini D."/>
            <person name="Giuliano L."/>
            <person name="Andermann E."/>
            <person name="Scheffer I.E."/>
            <person name="Michelucci R."/>
            <person name="Bahlo M."/>
            <person name="Franceschetti S."/>
            <person name="Sessa W.C."/>
            <person name="Berkovic S.F."/>
            <person name="Lehesjoki A.E."/>
        </authorList>
    </citation>
    <scope>VARIANT VAL-85</scope>
</reference>
<gene>
    <name evidence="20" type="primary">PEX19</name>
    <name type="synonym">HK33</name>
    <name type="synonym">PXF</name>
    <name type="ORF">OK/SW-cl.22</name>
</gene>
<feature type="initiator methionine" description="Removed" evidence="21 24">
    <location>
        <position position="1"/>
    </location>
</feature>
<feature type="chain" id="PRO_0000218759" description="Peroxisomal biogenesis factor 19">
    <location>
        <begin position="2"/>
        <end position="296"/>
    </location>
</feature>
<feature type="propeptide" id="PRO_0000393944" description="Removed in mature form" evidence="19">
    <location>
        <begin position="297"/>
        <end position="299"/>
    </location>
</feature>
<feature type="region of interest" description="Disordered" evidence="3">
    <location>
        <begin position="1"/>
        <end position="63"/>
    </location>
</feature>
<feature type="region of interest" description="Necessary for PEX19 function on peroxisome biogenesis">
    <location>
        <begin position="2"/>
        <end position="91"/>
    </location>
</feature>
<feature type="region of interest" description="Docking to the peroxisome membrane and binding to PEX3">
    <location>
        <begin position="2"/>
        <end position="56"/>
    </location>
</feature>
<feature type="compositionally biased region" description="Acidic residues" evidence="3">
    <location>
        <begin position="16"/>
        <end position="27"/>
    </location>
</feature>
<feature type="modified residue" description="N-acetylalanine" evidence="21 24">
    <location>
        <position position="2"/>
    </location>
</feature>
<feature type="modified residue" description="Phosphoserine" evidence="22 23">
    <location>
        <position position="35"/>
    </location>
</feature>
<feature type="modified residue" description="Phosphoserine" evidence="22">
    <location>
        <position position="54"/>
    </location>
</feature>
<feature type="modified residue" description="Phosphoserine" evidence="2">
    <location>
        <position position="66"/>
    </location>
</feature>
<feature type="modified residue" description="Phosphothreonine" evidence="1">
    <location>
        <position position="236"/>
    </location>
</feature>
<feature type="modified residue" description="Cysteine methyl ester" evidence="19">
    <location>
        <position position="296"/>
    </location>
</feature>
<feature type="lipid moiety-binding region" description="S-farnesyl cysteine" evidence="4 18">
    <location>
        <position position="296"/>
    </location>
</feature>
<feature type="splice variant" id="VSP_061572" description="In isoform 6.">
    <original>SALDDFDKAKPSPAPPS</original>
    <variation>RCPLRFPREVFPGTIRQ</variation>
    <location>
        <begin position="24"/>
        <end position="40"/>
    </location>
</feature>
<feature type="splice variant" id="VSP_061573" description="In isoform 6.">
    <location>
        <begin position="41"/>
        <end position="299"/>
    </location>
</feature>
<feature type="sequence variant" id="VAR_085044" description="Found in patients with progressive myoclonus epilepsy and dementia; uncertain significance; dbSNP:rs11550119." evidence="17">
    <original>A</original>
    <variation>V</variation>
    <location>
        <position position="85"/>
    </location>
</feature>
<feature type="mutagenesis site" description="Abolishes binding to PEX3." evidence="13">
    <original>F</original>
    <variation>A</variation>
    <location>
        <position position="29"/>
    </location>
</feature>
<feature type="mutagenesis site" description="Abolishes binding to PEX10, PEX11B, PEX12 and PEX13. Does not affect binding to PEX3 and PEX16." evidence="8">
    <location>
        <begin position="296"/>
        <end position="299"/>
    </location>
</feature>
<feature type="mutagenesis site" description="Slightly inhibits PEX19 function on peroxisome biogenesis." evidence="4 5 6 18">
    <original>C</original>
    <variation>A</variation>
    <location>
        <position position="296"/>
    </location>
</feature>
<feature type="mutagenesis site" description="Abolishes farnesylation. Abolishes PEX19 function on peroxisome biogenesis. Does not affect binding to ABCD1, ABCD2 and ABCD3." evidence="4 5 6 18">
    <original>C</original>
    <variation>S</variation>
    <location>
        <position position="296"/>
    </location>
</feature>
<feature type="helix" evidence="28">
    <location>
        <begin position="16"/>
        <end position="27"/>
    </location>
</feature>
<feature type="helix" evidence="27">
    <location>
        <begin position="28"/>
        <end position="31"/>
    </location>
</feature>
<feature type="helix" evidence="25">
    <location>
        <begin position="67"/>
        <end position="76"/>
    </location>
</feature>
<feature type="helix" evidence="26">
    <location>
        <begin position="172"/>
        <end position="182"/>
    </location>
</feature>
<feature type="helix" evidence="26">
    <location>
        <begin position="185"/>
        <end position="196"/>
    </location>
</feature>
<feature type="helix" evidence="26">
    <location>
        <begin position="199"/>
        <end position="206"/>
    </location>
</feature>
<feature type="helix" evidence="26">
    <location>
        <begin position="207"/>
        <end position="209"/>
    </location>
</feature>
<feature type="helix" evidence="26">
    <location>
        <begin position="212"/>
        <end position="234"/>
    </location>
</feature>
<feature type="helix" evidence="26">
    <location>
        <begin position="241"/>
        <end position="260"/>
    </location>
</feature>
<feature type="helix" evidence="26">
    <location>
        <begin position="266"/>
        <end position="268"/>
    </location>
</feature>
<feature type="helix" evidence="29">
    <location>
        <begin position="280"/>
        <end position="283"/>
    </location>
</feature>
<protein>
    <recommendedName>
        <fullName evidence="19">Peroxisomal biogenesis factor 19</fullName>
    </recommendedName>
    <alternativeName>
        <fullName>33 kDa housekeeping protein</fullName>
    </alternativeName>
    <alternativeName>
        <fullName>Peroxin-19</fullName>
    </alternativeName>
    <alternativeName>
        <fullName>Peroxisomal farnesylated protein</fullName>
    </alternativeName>
</protein>
<name>PEX19_HUMAN</name>
<comment type="function">
    <text evidence="4 5 7 9 10 11">Necessary for early peroxisomal biogenesis. Acts both as a cytosolic chaperone and as an import receptor for peroxisomal membrane proteins (PMPs). Binds and stabilizes newly synthesized PMPs in the cytoplasm by interacting with their hydrophobic membrane-spanning domains, and targets them to the peroxisome membrane by binding to the integral membrane protein PEX3. Excludes CDKN2A from the nucleus and prevents its interaction with MDM2, which results in active degradation of TP53.</text>
</comment>
<comment type="subunit">
    <text evidence="5 6 7 8 9 10 11 12 13 15">Interacts with a broad range of peroxisomal membrane proteins, including PEX3, PEX10, PEX11A, PEX11B, PEX12, PEX13, PEX14 and PEX16, PXMP2/PMP22, PXMP4/PMP24, SLC25A17/PMP34, ABCD1/ALDP, ABCD2/ALDRP, and ABCD3/PMP70. Also interacts with the tumor suppressor CDKN2A/p19ARF.</text>
</comment>
<comment type="subunit">
    <text evidence="16">(Microbial infection) Interacts with human cytomegalovirus protein UL37 isoform vMIA; this interaction inhibits the peroxisomal-dependent antiviral signaling.</text>
</comment>
<comment type="interaction">
    <interactant intactId="EBI-594747">
        <id>P40855</id>
    </interactant>
    <interactant intactId="EBI-81045">
        <id>P33897</id>
        <label>ABCD1</label>
    </interactant>
    <organismsDiffer>false</organismsDiffer>
    <experiments>3</experiments>
</comment>
<comment type="interaction">
    <interactant intactId="EBI-594747">
        <id>P40855</id>
    </interactant>
    <interactant intactId="EBI-80992">
        <id>P28288</id>
        <label>ABCD3</label>
    </interactant>
    <organismsDiffer>false</organismsDiffer>
    <experiments>4</experiments>
</comment>
<comment type="interaction">
    <interactant intactId="EBI-594747">
        <id>P40855</id>
    </interactant>
    <interactant intactId="EBI-526406">
        <id>O43521</id>
        <label>BCL2L11</label>
    </interactant>
    <organismsDiffer>false</organismsDiffer>
    <experiments>3</experiments>
</comment>
<comment type="interaction">
    <interactant intactId="EBI-594747">
        <id>P40855</id>
    </interactant>
    <interactant intactId="EBI-3918971">
        <id>Q9Y680</id>
        <label>FKBP7</label>
    </interactant>
    <organismsDiffer>false</organismsDiffer>
    <experiments>3</experiments>
</comment>
<comment type="interaction">
    <interactant intactId="EBI-594747">
        <id>P40855</id>
    </interactant>
    <interactant intactId="EBI-12383562">
        <id>P01574</id>
        <label>IFNB1</label>
    </interactant>
    <organismsDiffer>false</organismsDiffer>
    <experiments>3</experiments>
</comment>
<comment type="interaction">
    <interactant intactId="EBI-594747">
        <id>P40855</id>
    </interactant>
    <interactant intactId="EBI-2481154">
        <id>Q9NPF7</id>
        <label>IL23A</label>
    </interactant>
    <organismsDiffer>false</organismsDiffer>
    <experiments>6</experiments>
</comment>
<comment type="interaction">
    <interactant intactId="EBI-594747">
        <id>P40855</id>
    </interactant>
    <interactant intactId="EBI-3919010">
        <id>Q8WUY8</id>
        <label>NAT14</label>
    </interactant>
    <organismsDiffer>false</organismsDiffer>
    <experiments>5</experiments>
</comment>
<comment type="interaction">
    <interactant intactId="EBI-594747">
        <id>P40855</id>
    </interactant>
    <interactant intactId="EBI-14384265">
        <id>Q8N9F0</id>
        <label>NAT8L</label>
    </interactant>
    <organismsDiffer>false</organismsDiffer>
    <experiments>3</experiments>
</comment>
<comment type="interaction">
    <interactant intactId="EBI-594747">
        <id>P40855</id>
    </interactant>
    <interactant intactId="EBI-594824">
        <id>O96011</id>
        <label>PEX11B</label>
    </interactant>
    <organismsDiffer>false</organismsDiffer>
    <experiments>31</experiments>
</comment>
<comment type="interaction">
    <interactant intactId="EBI-594747">
        <id>P40855</id>
    </interactant>
    <interactant intactId="EBI-594836">
        <id>O00623</id>
        <label>PEX12</label>
    </interactant>
    <organismsDiffer>false</organismsDiffer>
    <experiments>2</experiments>
</comment>
<comment type="interaction">
    <interactant intactId="EBI-594747">
        <id>P40855</id>
    </interactant>
    <interactant intactId="EBI-594849">
        <id>Q92968</id>
        <label>PEX13</label>
    </interactant>
    <organismsDiffer>false</organismsDiffer>
    <experiments>12</experiments>
</comment>
<comment type="interaction">
    <interactant intactId="EBI-594747">
        <id>P40855</id>
    </interactant>
    <interactant intactId="EBI-594898">
        <id>O75381</id>
        <label>PEX14</label>
    </interactant>
    <organismsDiffer>false</organismsDiffer>
    <experiments>31</experiments>
</comment>
<comment type="interaction">
    <interactant intactId="EBI-594747">
        <id>P40855</id>
    </interactant>
    <interactant intactId="EBI-981985">
        <id>Q9Y5Y5</id>
        <label>PEX16</label>
    </interactant>
    <organismsDiffer>false</organismsDiffer>
    <experiments>29</experiments>
</comment>
<comment type="interaction">
    <interactant intactId="EBI-594747">
        <id>P40855</id>
    </interactant>
    <interactant intactId="EBI-713978">
        <id>P28328</id>
        <label>PEX2</label>
    </interactant>
    <organismsDiffer>false</organismsDiffer>
    <experiments>4</experiments>
</comment>
<comment type="interaction">
    <interactant intactId="EBI-594747">
        <id>P40855</id>
    </interactant>
    <interactant intactId="EBI-752057">
        <id>Q7Z412</id>
        <label>PEX26</label>
    </interactant>
    <organismsDiffer>false</organismsDiffer>
    <experiments>9</experiments>
</comment>
<comment type="interaction">
    <interactant intactId="EBI-594747">
        <id>P40855</id>
    </interactant>
    <interactant intactId="EBI-594885">
        <id>P56589</id>
        <label>PEX3</label>
    </interactant>
    <organismsDiffer>false</organismsDiffer>
    <experiments>60</experiments>
</comment>
<comment type="interaction">
    <interactant intactId="EBI-594747">
        <id>P40855</id>
    </interactant>
    <interactant intactId="EBI-359252">
        <id>P23284</id>
        <label>PPIB</label>
    </interactant>
    <organismsDiffer>false</organismsDiffer>
    <experiments>6</experiments>
</comment>
<comment type="interaction">
    <interactant intactId="EBI-594747">
        <id>P40855</id>
    </interactant>
    <interactant intactId="EBI-11974061">
        <id>Q9UIG4</id>
        <label>PSORS1C2</label>
    </interactant>
    <organismsDiffer>false</organismsDiffer>
    <experiments>5</experiments>
</comment>
<comment type="interaction">
    <interactant intactId="EBI-594747">
        <id>P40855</id>
    </interactant>
    <interactant intactId="EBI-1392944">
        <id>Q9NR77</id>
        <label>PXMP2</label>
    </interactant>
    <organismsDiffer>false</organismsDiffer>
    <experiments>5</experiments>
</comment>
<comment type="interaction">
    <interactant intactId="EBI-594747">
        <id>P40855</id>
    </interactant>
    <interactant intactId="EBI-594912">
        <id>O43808</id>
        <label>SLC25A17</label>
    </interactant>
    <organismsDiffer>false</organismsDiffer>
    <experiments>4</experiments>
</comment>
<comment type="interaction">
    <interactant intactId="EBI-594747">
        <id>P40855</id>
    </interactant>
    <interactant intactId="EBI-3921347">
        <id>P51687</id>
        <label>SUOX</label>
    </interactant>
    <organismsDiffer>false</organismsDiffer>
    <experiments>3</experiments>
</comment>
<comment type="interaction">
    <interactant intactId="EBI-594747">
        <id>P40855</id>
    </interactant>
    <interactant intactId="EBI-2932492">
        <id>Q99757</id>
        <label>TXN2</label>
    </interactant>
    <organismsDiffer>false</organismsDiffer>
    <experiments>3</experiments>
</comment>
<comment type="subcellular location">
    <subcellularLocation>
        <location evidence="5 7 11">Cytoplasm</location>
    </subcellularLocation>
    <subcellularLocation>
        <location evidence="4 5 11 16 18">Peroxisome membrane</location>
        <topology evidence="4 18">Lipid-anchor</topology>
        <orientation evidence="4 18">Cytoplasmic side</orientation>
    </subcellularLocation>
    <text evidence="5 11">Mainly cytoplasmic. Some fraction membrane-associated to the outer surface of peroxisomes.</text>
</comment>
<comment type="alternative products">
    <event type="alternative splicing"/>
    <isoform>
        <id>P40855-1</id>
        <name>1</name>
        <name>PXF-all</name>
        <sequence type="displayed"/>
    </isoform>
    <isoform>
        <id>P40855-2</id>
        <name>2</name>
        <name>PXF-delta-2</name>
        <name>PXF lacking exon 2</name>
        <sequence type="not described"/>
    </isoform>
    <isoform>
        <id>P40855-3</id>
        <name>3</name>
        <name>PXF-delta-4</name>
        <name>PXF lacking exon 4</name>
        <sequence type="not described"/>
    </isoform>
    <isoform>
        <id>P40855-4</id>
        <name>4</name>
        <name>PXF-delta-8</name>
        <name>PXF lacking part of exon 8</name>
        <sequence type="not described"/>
    </isoform>
    <isoform>
        <id>P40855-6</id>
        <name>6</name>
        <sequence type="described" ref="VSP_061572 VSP_061573"/>
    </isoform>
    <text>Experimental confirmation may be lacking for some isoforms.</text>
</comment>
<comment type="tissue specificity">
    <text evidence="18">Ubiquitously expressed. Isoform 1 is strongly predominant in all tissues except in utero where isoform 2 is the main form.</text>
</comment>
<comment type="disease" evidence="14">
    <disease id="DI-00922">
        <name>Peroxisome biogenesis disorder complementation group 14</name>
        <acronym>PBD-CG14</acronym>
        <description>A peroxisomal disorder arising from a failure of protein import into the peroxisomal membrane or matrix. The peroxisome biogenesis disorders (PBD group) are genetically heterogeneous with at least 14 distinct genetic groups as concluded from complementation studies. Include disorders are: Zellweger syndrome (ZWS), neonatal adrenoleukodystrophy (NALD), infantile Refsum disease (IRD), and classical rhizomelic chondrodysplasia punctata (RCDP). ZWS, NALD and IRD are distinct from RCDP and constitute a clinical continuum of overlapping phenotypes known as the Zellweger spectrum (PBD-ZSS).</description>
        <dbReference type="MIM" id="614886"/>
    </disease>
    <text>The disease is caused by variants affecting the gene represented in this entry.</text>
</comment>
<comment type="disease" evidence="4">
    <disease id="DI-03595">
        <name>Peroxisome biogenesis disorder 12A</name>
        <acronym>PBD12A</acronym>
        <description>A fatal peroxisome biogenesis disorder belonging to the Zellweger disease spectrum and clinically characterized by severe neurologic dysfunction with profound psychomotor retardation, severe hypotonia and neonatal seizures, craniofacial abnormalities, liver dysfunction, and biochemically by the absence of peroxisomes. Additional features include cardiovascular and skeletal defects, renal cysts, ocular abnormalities, and hearing impairment. Most severely affected individuals with the classic form of the disease (classic Zellweger syndrome) die within the first year of life.</description>
        <dbReference type="MIM" id="614886"/>
    </disease>
    <text>The disease is caused by variants affecting the gene represented in this entry.</text>
</comment>
<comment type="miscellaneous">
    <molecule>Isoform 1</molecule>
    <text>The two main transcripts are PXF-all and PXF-delta-2.</text>
</comment>
<comment type="miscellaneous">
    <molecule>Isoform 2</molecule>
    <text evidence="19">The two main transcripts are PXF-all and PXF-delta-2.</text>
</comment>
<comment type="miscellaneous">
    <molecule>Isoform 6</molecule>
    <text evidence="19">May be produced at very low levels due to a premature stop CC codon in the mRNA, leading to nonsense-mediated mRNA decay.</text>
</comment>
<comment type="similarity">
    <text evidence="19">Belongs to the peroxin-19 family.</text>
</comment>
<comment type="sequence caution" evidence="19">
    <conflict type="erroneous translation">
        <sequence resource="EMBL-CDS" id="BAB93469"/>
    </conflict>
    <text>Wrong choice of frame.</text>
</comment>
<dbReference type="EMBL" id="X75535">
    <property type="protein sequence ID" value="CAA53225.1"/>
    <property type="molecule type" value="mRNA"/>
</dbReference>
<dbReference type="EMBL" id="Y09048">
    <property type="protein sequence ID" value="CAA70257.1"/>
    <property type="molecule type" value="Genomic_DNA"/>
</dbReference>
<dbReference type="EMBL" id="AB018541">
    <property type="protein sequence ID" value="BAA76291.1"/>
    <property type="molecule type" value="mRNA"/>
</dbReference>
<dbReference type="EMBL" id="BT006879">
    <property type="protein sequence ID" value="AAP35525.1"/>
    <property type="molecule type" value="mRNA"/>
</dbReference>
<dbReference type="EMBL" id="KU178291">
    <property type="protein sequence ID" value="ALQ33749.1"/>
    <property type="molecule type" value="mRNA"/>
</dbReference>
<dbReference type="EMBL" id="AL139011">
    <property type="status" value="NOT_ANNOTATED_CDS"/>
    <property type="molecule type" value="Genomic_DNA"/>
</dbReference>
<dbReference type="EMBL" id="AL513282">
    <property type="status" value="NOT_ANNOTATED_CDS"/>
    <property type="molecule type" value="Genomic_DNA"/>
</dbReference>
<dbReference type="EMBL" id="CH471121">
    <property type="protein sequence ID" value="EAW52728.1"/>
    <property type="molecule type" value="Genomic_DNA"/>
</dbReference>
<dbReference type="EMBL" id="CH471121">
    <property type="protein sequence ID" value="EAW52729.1"/>
    <property type="molecule type" value="Genomic_DNA"/>
</dbReference>
<dbReference type="EMBL" id="BC000496">
    <property type="protein sequence ID" value="AAH00496.1"/>
    <property type="molecule type" value="mRNA"/>
</dbReference>
<dbReference type="EMBL" id="AB062286">
    <property type="protein sequence ID" value="BAB93469.1"/>
    <property type="status" value="ALT_SEQ"/>
    <property type="molecule type" value="mRNA"/>
</dbReference>
<dbReference type="CCDS" id="CCDS1201.1">
    <molecule id="P40855-1"/>
</dbReference>
<dbReference type="PIR" id="I37468">
    <property type="entry name" value="I37468"/>
</dbReference>
<dbReference type="RefSeq" id="NP_001180573.1">
    <property type="nucleotide sequence ID" value="NM_001193644.1"/>
</dbReference>
<dbReference type="RefSeq" id="NP_002848.1">
    <molecule id="P40855-1"/>
    <property type="nucleotide sequence ID" value="NM_002857.4"/>
</dbReference>
<dbReference type="PDB" id="2W85">
    <property type="method" value="NMR"/>
    <property type="chains" value="B=66-77"/>
</dbReference>
<dbReference type="PDB" id="2WL8">
    <property type="method" value="X-ray"/>
    <property type="resolution" value="2.05 A"/>
    <property type="chains" value="A/B/C/D=161-283"/>
</dbReference>
<dbReference type="PDB" id="3AJB">
    <property type="method" value="X-ray"/>
    <property type="resolution" value="2.50 A"/>
    <property type="chains" value="B=1-44"/>
</dbReference>
<dbReference type="PDB" id="3MK4">
    <property type="method" value="X-ray"/>
    <property type="resolution" value="2.42 A"/>
    <property type="chains" value="B=14-33"/>
</dbReference>
<dbReference type="PDB" id="5LNF">
    <property type="method" value="NMR"/>
    <property type="chains" value="A=161-299"/>
</dbReference>
<dbReference type="PDBsum" id="2W85"/>
<dbReference type="PDBsum" id="2WL8"/>
<dbReference type="PDBsum" id="3AJB"/>
<dbReference type="PDBsum" id="3MK4"/>
<dbReference type="PDBsum" id="5LNF"/>
<dbReference type="SMR" id="P40855"/>
<dbReference type="BioGRID" id="111782">
    <property type="interactions" value="208"/>
</dbReference>
<dbReference type="CORUM" id="P40855"/>
<dbReference type="DIP" id="DIP-24172N"/>
<dbReference type="ELM" id="P40855"/>
<dbReference type="FunCoup" id="P40855">
    <property type="interactions" value="1842"/>
</dbReference>
<dbReference type="IntAct" id="P40855">
    <property type="interactions" value="147"/>
</dbReference>
<dbReference type="MINT" id="P40855"/>
<dbReference type="STRING" id="9606.ENSP00000357051"/>
<dbReference type="TCDB" id="9.A.17.1.2">
    <property type="family name" value="the integral membrane peroxisomal protein importer-2 (ppi2) family"/>
</dbReference>
<dbReference type="GlyCosmos" id="P40855">
    <property type="glycosylation" value="1 site, 1 glycan"/>
</dbReference>
<dbReference type="GlyGen" id="P40855">
    <property type="glycosylation" value="4 sites, 1 O-linked glycan (4 sites)"/>
</dbReference>
<dbReference type="iPTMnet" id="P40855"/>
<dbReference type="MetOSite" id="P40855"/>
<dbReference type="PhosphoSitePlus" id="P40855"/>
<dbReference type="BioMuta" id="ENSG00000258465"/>
<dbReference type="BioMuta" id="PEX19"/>
<dbReference type="DMDM" id="729723"/>
<dbReference type="jPOST" id="P40855"/>
<dbReference type="MassIVE" id="P40855"/>
<dbReference type="PaxDb" id="9606-ENSP00000357051"/>
<dbReference type="PeptideAtlas" id="P40855"/>
<dbReference type="ProteomicsDB" id="22668"/>
<dbReference type="ProteomicsDB" id="32939"/>
<dbReference type="ProteomicsDB" id="55381">
    <molecule id="P40855-1"/>
</dbReference>
<dbReference type="Pumba" id="P40855"/>
<dbReference type="Antibodypedia" id="34274">
    <property type="antibodies" value="372 antibodies from 30 providers"/>
</dbReference>
<dbReference type="DNASU" id="5824"/>
<dbReference type="Ensembl" id="ENST00000368072.10">
    <molecule id="P40855-1"/>
    <property type="protein sequence ID" value="ENSP00000357051.5"/>
    <property type="gene ID" value="ENSG00000162735.19"/>
</dbReference>
<dbReference type="Ensembl" id="ENST00000472750.5">
    <molecule id="P40855-6"/>
    <property type="protein sequence ID" value="ENSP00000434633.1"/>
    <property type="gene ID" value="ENSG00000162735.19"/>
</dbReference>
<dbReference type="GeneID" id="5824"/>
<dbReference type="KEGG" id="hsa:5824"/>
<dbReference type="MANE-Select" id="ENST00000368072.10">
    <property type="protein sequence ID" value="ENSP00000357051.5"/>
    <property type="RefSeq nucleotide sequence ID" value="NM_002857.4"/>
    <property type="RefSeq protein sequence ID" value="NP_002848.1"/>
</dbReference>
<dbReference type="UCSC" id="uc001fvs.3">
    <molecule id="P40855-1"/>
    <property type="organism name" value="human"/>
</dbReference>
<dbReference type="UCSC" id="uc010pjc.2">
    <property type="organism name" value="human"/>
</dbReference>
<dbReference type="AGR" id="HGNC:9713"/>
<dbReference type="CTD" id="5824"/>
<dbReference type="DisGeNET" id="5824"/>
<dbReference type="GeneCards" id="PEX19"/>
<dbReference type="GeneReviews" id="PEX19"/>
<dbReference type="HGNC" id="HGNC:9713">
    <property type="gene designation" value="PEX19"/>
</dbReference>
<dbReference type="HPA" id="ENSG00000162735">
    <property type="expression patterns" value="Low tissue specificity"/>
</dbReference>
<dbReference type="MalaCards" id="PEX19"/>
<dbReference type="MIM" id="600279">
    <property type="type" value="gene"/>
</dbReference>
<dbReference type="MIM" id="614886">
    <property type="type" value="phenotype"/>
</dbReference>
<dbReference type="neXtProt" id="NX_P40855"/>
<dbReference type="OpenTargets" id="ENSG00000162735"/>
<dbReference type="OpenTargets" id="ENSG00000258465"/>
<dbReference type="Orphanet" id="772">
    <property type="disease" value="Infantile Refsum disease"/>
</dbReference>
<dbReference type="Orphanet" id="44">
    <property type="disease" value="Neonatal adrenoleukodystrophy"/>
</dbReference>
<dbReference type="Orphanet" id="912">
    <property type="disease" value="Zellweger syndrome"/>
</dbReference>
<dbReference type="PharmGKB" id="PA34058"/>
<dbReference type="VEuPathDB" id="HostDB:ENSG00000162735"/>
<dbReference type="VEuPathDB" id="HostDB:ENSG00000258465"/>
<dbReference type="eggNOG" id="KOG3133">
    <property type="taxonomic scope" value="Eukaryota"/>
</dbReference>
<dbReference type="GeneTree" id="ENSGT00390000010993"/>
<dbReference type="HOGENOM" id="CLU_043063_3_0_1"/>
<dbReference type="InParanoid" id="P40855"/>
<dbReference type="OMA" id="YEPMKEM"/>
<dbReference type="OrthoDB" id="21292at2759"/>
<dbReference type="PAN-GO" id="P40855">
    <property type="GO annotations" value="3 GO annotations based on evolutionary models"/>
</dbReference>
<dbReference type="PhylomeDB" id="P40855"/>
<dbReference type="TreeFam" id="TF315082"/>
<dbReference type="TreeFam" id="TF326071"/>
<dbReference type="PathwayCommons" id="P40855"/>
<dbReference type="Reactome" id="R-HSA-1369062">
    <property type="pathway name" value="ABC transporters in lipid homeostasis"/>
</dbReference>
<dbReference type="Reactome" id="R-HSA-9603798">
    <property type="pathway name" value="Class I peroxisomal membrane protein import"/>
</dbReference>
<dbReference type="SignaLink" id="P40855"/>
<dbReference type="SIGNOR" id="P40855"/>
<dbReference type="BioGRID-ORCS" id="5824">
    <property type="hits" value="32 hits in 1146 CRISPR screens"/>
</dbReference>
<dbReference type="ChiTaRS" id="PEX19">
    <property type="organism name" value="human"/>
</dbReference>
<dbReference type="EvolutionaryTrace" id="P40855"/>
<dbReference type="GeneWiki" id="PEX19"/>
<dbReference type="GenomeRNAi" id="5824"/>
<dbReference type="Pharos" id="P40855">
    <property type="development level" value="Tbio"/>
</dbReference>
<dbReference type="PRO" id="PR:P40855"/>
<dbReference type="Proteomes" id="UP000005640">
    <property type="component" value="Chromosome 1"/>
</dbReference>
<dbReference type="RNAct" id="P40855">
    <property type="molecule type" value="protein"/>
</dbReference>
<dbReference type="Bgee" id="ENSG00000162735">
    <property type="expression patterns" value="Expressed in hindlimb stylopod muscle and 198 other cell types or tissues"/>
</dbReference>
<dbReference type="ExpressionAtlas" id="P40855">
    <property type="expression patterns" value="baseline and differential"/>
</dbReference>
<dbReference type="GO" id="GO:0031526">
    <property type="term" value="C:brush border membrane"/>
    <property type="evidence" value="ECO:0000250"/>
    <property type="project" value="UniProtKB"/>
</dbReference>
<dbReference type="GO" id="GO:0005737">
    <property type="term" value="C:cytoplasm"/>
    <property type="evidence" value="ECO:0000314"/>
    <property type="project" value="UniProtKB"/>
</dbReference>
<dbReference type="GO" id="GO:0005829">
    <property type="term" value="C:cytosol"/>
    <property type="evidence" value="ECO:0000314"/>
    <property type="project" value="UniProtKB"/>
</dbReference>
<dbReference type="GO" id="GO:0016020">
    <property type="term" value="C:membrane"/>
    <property type="evidence" value="ECO:0000314"/>
    <property type="project" value="UniProtKB"/>
</dbReference>
<dbReference type="GO" id="GO:0005654">
    <property type="term" value="C:nucleoplasm"/>
    <property type="evidence" value="ECO:0000314"/>
    <property type="project" value="HPA"/>
</dbReference>
<dbReference type="GO" id="GO:0005634">
    <property type="term" value="C:nucleus"/>
    <property type="evidence" value="ECO:0000315"/>
    <property type="project" value="UniProtKB"/>
</dbReference>
<dbReference type="GO" id="GO:0005778">
    <property type="term" value="C:peroxisomal membrane"/>
    <property type="evidence" value="ECO:0000314"/>
    <property type="project" value="UniProtKB"/>
</dbReference>
<dbReference type="GO" id="GO:0005777">
    <property type="term" value="C:peroxisome"/>
    <property type="evidence" value="ECO:0000314"/>
    <property type="project" value="HPA"/>
</dbReference>
<dbReference type="GO" id="GO:0032991">
    <property type="term" value="C:protein-containing complex"/>
    <property type="evidence" value="ECO:0000314"/>
    <property type="project" value="UniProtKB"/>
</dbReference>
<dbReference type="GO" id="GO:0051117">
    <property type="term" value="F:ATPase binding"/>
    <property type="evidence" value="ECO:0000353"/>
    <property type="project" value="UniProtKB"/>
</dbReference>
<dbReference type="GO" id="GO:0036105">
    <property type="term" value="F:peroxisome membrane class-1 targeting sequence binding"/>
    <property type="evidence" value="ECO:0000314"/>
    <property type="project" value="UniProtKB"/>
</dbReference>
<dbReference type="GO" id="GO:0033328">
    <property type="term" value="F:peroxisome membrane targeting sequence binding"/>
    <property type="evidence" value="ECO:0000318"/>
    <property type="project" value="GO_Central"/>
</dbReference>
<dbReference type="GO" id="GO:0140597">
    <property type="term" value="F:protein carrier chaperone"/>
    <property type="evidence" value="ECO:0000314"/>
    <property type="project" value="UniProtKB"/>
</dbReference>
<dbReference type="GO" id="GO:0061077">
    <property type="term" value="P:chaperone-mediated protein folding"/>
    <property type="evidence" value="ECO:0000314"/>
    <property type="project" value="UniProtKB"/>
</dbReference>
<dbReference type="GO" id="GO:0072663">
    <property type="term" value="P:establishment of protein localization to peroxisome"/>
    <property type="evidence" value="ECO:0000315"/>
    <property type="project" value="UniProtKB"/>
</dbReference>
<dbReference type="GO" id="GO:1900131">
    <property type="term" value="P:negative regulation of lipid binding"/>
    <property type="evidence" value="ECO:0000314"/>
    <property type="project" value="UniProtKB"/>
</dbReference>
<dbReference type="GO" id="GO:0016559">
    <property type="term" value="P:peroxisome fission"/>
    <property type="evidence" value="ECO:0000315"/>
    <property type="project" value="UniProtKB"/>
</dbReference>
<dbReference type="GO" id="GO:0016557">
    <property type="term" value="P:peroxisome membrane biogenesis"/>
    <property type="evidence" value="ECO:0000314"/>
    <property type="project" value="UniProtKB"/>
</dbReference>
<dbReference type="GO" id="GO:0007031">
    <property type="term" value="P:peroxisome organization"/>
    <property type="evidence" value="ECO:0000315"/>
    <property type="project" value="UniProtKB"/>
</dbReference>
<dbReference type="GO" id="GO:0045046">
    <property type="term" value="P:protein import into peroxisome membrane"/>
    <property type="evidence" value="ECO:0000314"/>
    <property type="project" value="UniProtKB"/>
</dbReference>
<dbReference type="GO" id="GO:0050821">
    <property type="term" value="P:protein stabilization"/>
    <property type="evidence" value="ECO:0000314"/>
    <property type="project" value="UniProtKB"/>
</dbReference>
<dbReference type="GO" id="GO:0006625">
    <property type="term" value="P:protein targeting to peroxisome"/>
    <property type="evidence" value="ECO:0000314"/>
    <property type="project" value="UniProtKB"/>
</dbReference>
<dbReference type="DisProt" id="DP01805"/>
<dbReference type="FunFam" id="1.20.120.900:FF:000001">
    <property type="entry name" value="Putative peroxisomal biogenesis factor 19"/>
    <property type="match status" value="1"/>
</dbReference>
<dbReference type="Gene3D" id="1.20.120.900">
    <property type="entry name" value="Pex19, mPTS binding domain"/>
    <property type="match status" value="1"/>
</dbReference>
<dbReference type="InterPro" id="IPR006708">
    <property type="entry name" value="Pex19"/>
</dbReference>
<dbReference type="InterPro" id="IPR038322">
    <property type="entry name" value="Pex19_C_sf"/>
</dbReference>
<dbReference type="PANTHER" id="PTHR12774">
    <property type="entry name" value="PEROXISOMAL BIOGENESIS FACTOR 19"/>
    <property type="match status" value="1"/>
</dbReference>
<dbReference type="PANTHER" id="PTHR12774:SF2">
    <property type="entry name" value="PEROXISOMAL BIOGENESIS FACTOR 19"/>
    <property type="match status" value="1"/>
</dbReference>
<dbReference type="Pfam" id="PF04614">
    <property type="entry name" value="Pex19"/>
    <property type="match status" value="1"/>
</dbReference>
<accession>P40855</accession>
<accession>D3DVE7</accession>
<accession>E9PPB4</accession>
<accession>G3V3G9</accession>
<accession>Q5QNY4</accession>
<accession>Q8NI97</accession>
<keyword id="KW-0002">3D-structure</keyword>
<keyword id="KW-0007">Acetylation</keyword>
<keyword id="KW-0025">Alternative splicing</keyword>
<keyword id="KW-0963">Cytoplasm</keyword>
<keyword id="KW-0945">Host-virus interaction</keyword>
<keyword id="KW-0449">Lipoprotein</keyword>
<keyword id="KW-0472">Membrane</keyword>
<keyword id="KW-0488">Methylation</keyword>
<keyword id="KW-0576">Peroxisome</keyword>
<keyword id="KW-0962">Peroxisome biogenesis</keyword>
<keyword id="KW-0958">Peroxisome biogenesis disorder</keyword>
<keyword id="KW-0597">Phosphoprotein</keyword>
<keyword id="KW-0636">Prenylation</keyword>
<keyword id="KW-1267">Proteomics identification</keyword>
<keyword id="KW-1185">Reference proteome</keyword>
<keyword id="KW-0861">Zellweger syndrome</keyword>
<evidence type="ECO:0000250" key="1">
    <source>
        <dbReference type="UniProtKB" id="Q8VCI5"/>
    </source>
</evidence>
<evidence type="ECO:0000250" key="2">
    <source>
        <dbReference type="UniProtKB" id="Q9QYU1"/>
    </source>
</evidence>
<evidence type="ECO:0000256" key="3">
    <source>
        <dbReference type="SAM" id="MobiDB-lite"/>
    </source>
</evidence>
<evidence type="ECO:0000269" key="4">
    <source>
    </source>
</evidence>
<evidence type="ECO:0000269" key="5">
    <source>
    </source>
</evidence>
<evidence type="ECO:0000269" key="6">
    <source>
    </source>
</evidence>
<evidence type="ECO:0000269" key="7">
    <source>
    </source>
</evidence>
<evidence type="ECO:0000269" key="8">
    <source>
    </source>
</evidence>
<evidence type="ECO:0000269" key="9">
    <source>
    </source>
</evidence>
<evidence type="ECO:0000269" key="10">
    <source>
    </source>
</evidence>
<evidence type="ECO:0000269" key="11">
    <source>
    </source>
</evidence>
<evidence type="ECO:0000269" key="12">
    <source>
    </source>
</evidence>
<evidence type="ECO:0000269" key="13">
    <source>
    </source>
</evidence>
<evidence type="ECO:0000269" key="14">
    <source>
    </source>
</evidence>
<evidence type="ECO:0000269" key="15">
    <source>
    </source>
</evidence>
<evidence type="ECO:0000269" key="16">
    <source>
    </source>
</evidence>
<evidence type="ECO:0000269" key="17">
    <source>
    </source>
</evidence>
<evidence type="ECO:0000269" key="18">
    <source>
    </source>
</evidence>
<evidence type="ECO:0000305" key="19"/>
<evidence type="ECO:0000312" key="20">
    <source>
        <dbReference type="HGNC" id="HGNC:9713"/>
    </source>
</evidence>
<evidence type="ECO:0007744" key="21">
    <source>
    </source>
</evidence>
<evidence type="ECO:0007744" key="22">
    <source>
    </source>
</evidence>
<evidence type="ECO:0007744" key="23">
    <source>
    </source>
</evidence>
<evidence type="ECO:0007744" key="24">
    <source>
    </source>
</evidence>
<evidence type="ECO:0007829" key="25">
    <source>
        <dbReference type="PDB" id="2W85"/>
    </source>
</evidence>
<evidence type="ECO:0007829" key="26">
    <source>
        <dbReference type="PDB" id="2WL8"/>
    </source>
</evidence>
<evidence type="ECO:0007829" key="27">
    <source>
        <dbReference type="PDB" id="3AJB"/>
    </source>
</evidence>
<evidence type="ECO:0007829" key="28">
    <source>
        <dbReference type="PDB" id="3MK4"/>
    </source>
</evidence>
<evidence type="ECO:0007829" key="29">
    <source>
        <dbReference type="PDB" id="5LNF"/>
    </source>
</evidence>